<reference key="1">
    <citation type="journal article" date="2003" name="Nat. Genet.">
        <title>Comparative analysis of the genome sequences of Bordetella pertussis, Bordetella parapertussis and Bordetella bronchiseptica.</title>
        <authorList>
            <person name="Parkhill J."/>
            <person name="Sebaihia M."/>
            <person name="Preston A."/>
            <person name="Murphy L.D."/>
            <person name="Thomson N.R."/>
            <person name="Harris D.E."/>
            <person name="Holden M.T.G."/>
            <person name="Churcher C.M."/>
            <person name="Bentley S.D."/>
            <person name="Mungall K.L."/>
            <person name="Cerdeno-Tarraga A.-M."/>
            <person name="Temple L."/>
            <person name="James K.D."/>
            <person name="Harris B."/>
            <person name="Quail M.A."/>
            <person name="Achtman M."/>
            <person name="Atkin R."/>
            <person name="Baker S."/>
            <person name="Basham D."/>
            <person name="Bason N."/>
            <person name="Cherevach I."/>
            <person name="Chillingworth T."/>
            <person name="Collins M."/>
            <person name="Cronin A."/>
            <person name="Davis P."/>
            <person name="Doggett J."/>
            <person name="Feltwell T."/>
            <person name="Goble A."/>
            <person name="Hamlin N."/>
            <person name="Hauser H."/>
            <person name="Holroyd S."/>
            <person name="Jagels K."/>
            <person name="Leather S."/>
            <person name="Moule S."/>
            <person name="Norberczak H."/>
            <person name="O'Neil S."/>
            <person name="Ormond D."/>
            <person name="Price C."/>
            <person name="Rabbinowitsch E."/>
            <person name="Rutter S."/>
            <person name="Sanders M."/>
            <person name="Saunders D."/>
            <person name="Seeger K."/>
            <person name="Sharp S."/>
            <person name="Simmonds M."/>
            <person name="Skelton J."/>
            <person name="Squares R."/>
            <person name="Squares S."/>
            <person name="Stevens K."/>
            <person name="Unwin L."/>
            <person name="Whitehead S."/>
            <person name="Barrell B.G."/>
            <person name="Maskell D.J."/>
        </authorList>
    </citation>
    <scope>NUCLEOTIDE SEQUENCE [LARGE SCALE GENOMIC DNA]</scope>
    <source>
        <strain>ATCC BAA-588 / NCTC 13252 / RB50</strain>
    </source>
</reference>
<dbReference type="EC" id="1.4.1.21" evidence="1"/>
<dbReference type="EMBL" id="BX640442">
    <property type="protein sequence ID" value="CAE32244.1"/>
    <property type="molecule type" value="Genomic_DNA"/>
</dbReference>
<dbReference type="RefSeq" id="WP_003810027.1">
    <property type="nucleotide sequence ID" value="NC_002927.3"/>
</dbReference>
<dbReference type="SMR" id="Q7WLJ8"/>
<dbReference type="KEGG" id="bbr:BB1747"/>
<dbReference type="eggNOG" id="COG1712">
    <property type="taxonomic scope" value="Bacteria"/>
</dbReference>
<dbReference type="HOGENOM" id="CLU_089550_0_0_4"/>
<dbReference type="UniPathway" id="UPA00253">
    <property type="reaction ID" value="UER00456"/>
</dbReference>
<dbReference type="Proteomes" id="UP000001027">
    <property type="component" value="Chromosome"/>
</dbReference>
<dbReference type="GO" id="GO:0033735">
    <property type="term" value="F:aspartate dehydrogenase activity"/>
    <property type="evidence" value="ECO:0007669"/>
    <property type="project" value="UniProtKB-EC"/>
</dbReference>
<dbReference type="GO" id="GO:0051287">
    <property type="term" value="F:NAD binding"/>
    <property type="evidence" value="ECO:0007669"/>
    <property type="project" value="UniProtKB-UniRule"/>
</dbReference>
<dbReference type="GO" id="GO:0050661">
    <property type="term" value="F:NADP binding"/>
    <property type="evidence" value="ECO:0007669"/>
    <property type="project" value="UniProtKB-UniRule"/>
</dbReference>
<dbReference type="GO" id="GO:0016639">
    <property type="term" value="F:oxidoreductase activity, acting on the CH-NH2 group of donors, NAD or NADP as acceptor"/>
    <property type="evidence" value="ECO:0007669"/>
    <property type="project" value="UniProtKB-UniRule"/>
</dbReference>
<dbReference type="GO" id="GO:0009435">
    <property type="term" value="P:NAD biosynthetic process"/>
    <property type="evidence" value="ECO:0007669"/>
    <property type="project" value="UniProtKB-UniRule"/>
</dbReference>
<dbReference type="Gene3D" id="3.30.360.10">
    <property type="entry name" value="Dihydrodipicolinate Reductase, domain 2"/>
    <property type="match status" value="1"/>
</dbReference>
<dbReference type="Gene3D" id="3.40.50.720">
    <property type="entry name" value="NAD(P)-binding Rossmann-like Domain"/>
    <property type="match status" value="1"/>
</dbReference>
<dbReference type="HAMAP" id="MF_01265">
    <property type="entry name" value="NadX"/>
    <property type="match status" value="1"/>
</dbReference>
<dbReference type="InterPro" id="IPR005106">
    <property type="entry name" value="Asp/hSer_DH_NAD-bd"/>
</dbReference>
<dbReference type="InterPro" id="IPR002811">
    <property type="entry name" value="Asp_DH"/>
</dbReference>
<dbReference type="InterPro" id="IPR020626">
    <property type="entry name" value="Asp_DH_prok"/>
</dbReference>
<dbReference type="InterPro" id="IPR011182">
    <property type="entry name" value="L-Asp_DH"/>
</dbReference>
<dbReference type="InterPro" id="IPR036291">
    <property type="entry name" value="NAD(P)-bd_dom_sf"/>
</dbReference>
<dbReference type="NCBIfam" id="NF009824">
    <property type="entry name" value="PRK13301.1"/>
    <property type="match status" value="1"/>
</dbReference>
<dbReference type="NCBIfam" id="NF009828">
    <property type="entry name" value="PRK13303.1-3"/>
    <property type="match status" value="1"/>
</dbReference>
<dbReference type="NCBIfam" id="NF009829">
    <property type="entry name" value="PRK13303.1-4"/>
    <property type="match status" value="1"/>
</dbReference>
<dbReference type="PANTHER" id="PTHR31873:SF6">
    <property type="entry name" value="ASPARTATE DEHYDROGENASE DOMAIN-CONTAINING PROTEIN"/>
    <property type="match status" value="1"/>
</dbReference>
<dbReference type="PANTHER" id="PTHR31873">
    <property type="entry name" value="L-ASPARTATE DEHYDROGENASE-RELATED"/>
    <property type="match status" value="1"/>
</dbReference>
<dbReference type="Pfam" id="PF01958">
    <property type="entry name" value="Asp_DH_C"/>
    <property type="match status" value="1"/>
</dbReference>
<dbReference type="Pfam" id="PF03447">
    <property type="entry name" value="NAD_binding_3"/>
    <property type="match status" value="1"/>
</dbReference>
<dbReference type="PIRSF" id="PIRSF005227">
    <property type="entry name" value="Asp_dh_NAD_syn"/>
    <property type="match status" value="1"/>
</dbReference>
<dbReference type="SUPFAM" id="SSF55347">
    <property type="entry name" value="Glyceraldehyde-3-phosphate dehydrogenase-like, C-terminal domain"/>
    <property type="match status" value="1"/>
</dbReference>
<dbReference type="SUPFAM" id="SSF51735">
    <property type="entry name" value="NAD(P)-binding Rossmann-fold domains"/>
    <property type="match status" value="1"/>
</dbReference>
<evidence type="ECO:0000255" key="1">
    <source>
        <dbReference type="HAMAP-Rule" id="MF_01265"/>
    </source>
</evidence>
<keyword id="KW-0520">NAD</keyword>
<keyword id="KW-0521">NADP</keyword>
<keyword id="KW-0560">Oxidoreductase</keyword>
<keyword id="KW-0662">Pyridine nucleotide biosynthesis</keyword>
<sequence>MTHRIAFIGLGAIASDVAAGLLADAAQPCQLAALTRNAADLPPALAGRVALLDGLPGLLAWRPDLVVEAAGQQAIAEHAEGCLRAGLDMIICSAGALADDALRARLIAAAEAGGARIRVPAGAIAGLDYLQAVAGRDDAEVVYESRKPVAAWRAELPGMGIDPDTLAESRTLFSGPAREAALRFPKNLNVAATLALAGIGMTRTRVEVVVDPRARGNQHRIQVRSPLGEMQIELVNAPSPANPKTSWLVAQSVLATIRRHLARFTIG</sequence>
<accession>Q7WLJ8</accession>
<comment type="function">
    <text evidence="1">Specifically catalyzes the NAD or NADP-dependent dehydrogenation of L-aspartate to iminoaspartate.</text>
</comment>
<comment type="catalytic activity">
    <reaction evidence="1">
        <text>L-aspartate + NADP(+) + H2O = oxaloacetate + NH4(+) + NADPH + H(+)</text>
        <dbReference type="Rhea" id="RHEA:11784"/>
        <dbReference type="ChEBI" id="CHEBI:15377"/>
        <dbReference type="ChEBI" id="CHEBI:15378"/>
        <dbReference type="ChEBI" id="CHEBI:16452"/>
        <dbReference type="ChEBI" id="CHEBI:28938"/>
        <dbReference type="ChEBI" id="CHEBI:29991"/>
        <dbReference type="ChEBI" id="CHEBI:57783"/>
        <dbReference type="ChEBI" id="CHEBI:58349"/>
        <dbReference type="EC" id="1.4.1.21"/>
    </reaction>
</comment>
<comment type="catalytic activity">
    <reaction evidence="1">
        <text>L-aspartate + NAD(+) + H2O = oxaloacetate + NH4(+) + NADH + H(+)</text>
        <dbReference type="Rhea" id="RHEA:11788"/>
        <dbReference type="ChEBI" id="CHEBI:15377"/>
        <dbReference type="ChEBI" id="CHEBI:15378"/>
        <dbReference type="ChEBI" id="CHEBI:16452"/>
        <dbReference type="ChEBI" id="CHEBI:28938"/>
        <dbReference type="ChEBI" id="CHEBI:29991"/>
        <dbReference type="ChEBI" id="CHEBI:57540"/>
        <dbReference type="ChEBI" id="CHEBI:57945"/>
        <dbReference type="EC" id="1.4.1.21"/>
    </reaction>
</comment>
<comment type="pathway">
    <text evidence="1">Cofactor biosynthesis; NAD(+) biosynthesis; iminoaspartate from L-aspartate (dehydrogenase route): step 1/1.</text>
</comment>
<comment type="miscellaneous">
    <text evidence="1">The iminoaspartate product is unstable in aqueous solution and can decompose to oxaloacetate and ammonia.</text>
</comment>
<comment type="similarity">
    <text evidence="1">Belongs to the L-aspartate dehydrogenase family.</text>
</comment>
<feature type="chain" id="PRO_0000144881" description="L-aspartate dehydrogenase 2">
    <location>
        <begin position="1"/>
        <end position="267"/>
    </location>
</feature>
<feature type="active site" evidence="1">
    <location>
        <position position="219"/>
    </location>
</feature>
<feature type="binding site" evidence="1">
    <location>
        <position position="123"/>
    </location>
    <ligand>
        <name>NAD(+)</name>
        <dbReference type="ChEBI" id="CHEBI:57540"/>
    </ligand>
</feature>
<feature type="binding site" evidence="1">
    <location>
        <position position="189"/>
    </location>
    <ligand>
        <name>NAD(+)</name>
        <dbReference type="ChEBI" id="CHEBI:57540"/>
    </ligand>
</feature>
<proteinExistence type="inferred from homology"/>
<organism>
    <name type="scientific">Bordetella bronchiseptica (strain ATCC BAA-588 / NCTC 13252 / RB50)</name>
    <name type="common">Alcaligenes bronchisepticus</name>
    <dbReference type="NCBI Taxonomy" id="257310"/>
    <lineage>
        <taxon>Bacteria</taxon>
        <taxon>Pseudomonadati</taxon>
        <taxon>Pseudomonadota</taxon>
        <taxon>Betaproteobacteria</taxon>
        <taxon>Burkholderiales</taxon>
        <taxon>Alcaligenaceae</taxon>
        <taxon>Bordetella</taxon>
    </lineage>
</organism>
<protein>
    <recommendedName>
        <fullName evidence="1">L-aspartate dehydrogenase 2</fullName>
        <ecNumber evidence="1">1.4.1.21</ecNumber>
    </recommendedName>
</protein>
<name>ASPD2_BORBR</name>
<gene>
    <name evidence="1" type="primary">nadX2</name>
    <name type="ordered locus">BB1747</name>
</gene>